<evidence type="ECO:0000255" key="1"/>
<evidence type="ECO:0000255" key="2">
    <source>
        <dbReference type="PROSITE-ProRule" id="PRU00483"/>
    </source>
</evidence>
<evidence type="ECO:0000269" key="3">
    <source>
    </source>
</evidence>
<evidence type="ECO:0000269" key="4">
    <source>
    </source>
</evidence>
<evidence type="ECO:0000305" key="5"/>
<evidence type="ECO:0000305" key="6">
    <source>
    </source>
</evidence>
<evidence type="ECO:0000312" key="7">
    <source>
        <dbReference type="EMBL" id="AAA29019.1"/>
    </source>
</evidence>
<evidence type="ECO:0000312" key="8">
    <source>
        <dbReference type="EMBL" id="AAF53085.1"/>
    </source>
</evidence>
<evidence type="ECO:0000312" key="9">
    <source>
        <dbReference type="EMBL" id="ABC86502.2"/>
    </source>
</evidence>
<evidence type="ECO:0000312" key="10">
    <source>
        <dbReference type="EMBL" id="ABO71722.1"/>
    </source>
</evidence>
<evidence type="ECO:0000312" key="11">
    <source>
        <dbReference type="EMBL" id="ANY27844.1"/>
    </source>
</evidence>
<evidence type="ECO:0000312" key="12">
    <source>
        <dbReference type="EMBL" id="CAA31103.1"/>
    </source>
</evidence>
<evidence type="ECO:0000312" key="13">
    <source>
        <dbReference type="PIR" id="A48321"/>
    </source>
</evidence>
<accession>Q9VKI3</accession>
<accession>A4UM13</accession>
<accession>Q24588</accession>
<accession>Q29QF0</accession>
<accession>Q629J1</accession>
<accession>X2J9F7</accession>
<feature type="signal peptide" evidence="1">
    <location>
        <begin position="1"/>
        <end position="17"/>
    </location>
</feature>
<feature type="chain" id="PRO_0000398796" description="Vitelline membrane protein Vm32E" evidence="1">
    <location>
        <begin position="18"/>
        <end position="116"/>
    </location>
</feature>
<feature type="domain" description="VM" evidence="2">
    <location>
        <begin position="36"/>
        <end position="73"/>
    </location>
</feature>
<feature type="sequence conflict" description="In Ref. 2; ABO71722." evidence="5" ref="2">
    <original>I</original>
    <variation>L</variation>
    <location>
        <position position="14"/>
    </location>
</feature>
<feature type="sequence conflict" description="In Ref. 1; AAA29019." evidence="5" ref="1">
    <original>G</original>
    <variation>R</variation>
    <location>
        <position position="70"/>
    </location>
</feature>
<feature type="sequence conflict" description="In Ref. 1; AAA29019/CAA31103." evidence="5" ref="1">
    <original>HYVG</original>
    <variation>TTWT</variation>
    <location>
        <begin position="78"/>
        <end position="81"/>
    </location>
</feature>
<reference evidence="5 7 13" key="1">
    <citation type="journal article" date="1989" name="Dev. Genet.">
        <title>Sex-, tissue-, and stage-specific expression of a vitelline membrane protein gene from region 32 of the second chromosome of Drosophila melanogaster.</title>
        <authorList>
            <person name="Gigliotti S."/>
            <person name="Graziani F."/>
            <person name="De Ponti L."/>
            <person name="Rafti F."/>
            <person name="Manzi A."/>
            <person name="Lavorgna G."/>
            <person name="Gargiulo G."/>
            <person name="Malva C."/>
        </authorList>
    </citation>
    <scope>NUCLEOTIDE SEQUENCE [GENOMIC DNA]</scope>
    <scope>FUNCTION</scope>
    <scope>SUBCELLULAR LOCATION</scope>
    <scope>TISSUE SPECIFICITY</scope>
    <scope>DEVELOPMENTAL STAGE</scope>
    <source>
        <strain evidence="12">Oregon-R</strain>
        <tissue evidence="12">Embryo</tissue>
    </source>
</reference>
<reference evidence="10" key="2">
    <citation type="journal article" date="2007" name="Mol. Biol. Evol.">
        <title>Rapid evolution of outer egg membrane proteins in the Drosophila melanogaster subgroup: a case of ecologically driven evolution of female reproductive traits.</title>
        <authorList>
            <person name="Jagadeeshan S."/>
            <person name="Singh R.S."/>
        </authorList>
    </citation>
    <scope>NUCLEOTIDE SEQUENCE [GENOMIC DNA]</scope>
</reference>
<reference evidence="8" key="3">
    <citation type="journal article" date="2000" name="Science">
        <title>The genome sequence of Drosophila melanogaster.</title>
        <authorList>
            <person name="Adams M.D."/>
            <person name="Celniker S.E."/>
            <person name="Holt R.A."/>
            <person name="Evans C.A."/>
            <person name="Gocayne J.D."/>
            <person name="Amanatides P.G."/>
            <person name="Scherer S.E."/>
            <person name="Li P.W."/>
            <person name="Hoskins R.A."/>
            <person name="Galle R.F."/>
            <person name="George R.A."/>
            <person name="Lewis S.E."/>
            <person name="Richards S."/>
            <person name="Ashburner M."/>
            <person name="Henderson S.N."/>
            <person name="Sutton G.G."/>
            <person name="Wortman J.R."/>
            <person name="Yandell M.D."/>
            <person name="Zhang Q."/>
            <person name="Chen L.X."/>
            <person name="Brandon R.C."/>
            <person name="Rogers Y.-H.C."/>
            <person name="Blazej R.G."/>
            <person name="Champe M."/>
            <person name="Pfeiffer B.D."/>
            <person name="Wan K.H."/>
            <person name="Doyle C."/>
            <person name="Baxter E.G."/>
            <person name="Helt G."/>
            <person name="Nelson C.R."/>
            <person name="Miklos G.L.G."/>
            <person name="Abril J.F."/>
            <person name="Agbayani A."/>
            <person name="An H.-J."/>
            <person name="Andrews-Pfannkoch C."/>
            <person name="Baldwin D."/>
            <person name="Ballew R.M."/>
            <person name="Basu A."/>
            <person name="Baxendale J."/>
            <person name="Bayraktaroglu L."/>
            <person name="Beasley E.M."/>
            <person name="Beeson K.Y."/>
            <person name="Benos P.V."/>
            <person name="Berman B.P."/>
            <person name="Bhandari D."/>
            <person name="Bolshakov S."/>
            <person name="Borkova D."/>
            <person name="Botchan M.R."/>
            <person name="Bouck J."/>
            <person name="Brokstein P."/>
            <person name="Brottier P."/>
            <person name="Burtis K.C."/>
            <person name="Busam D.A."/>
            <person name="Butler H."/>
            <person name="Cadieu E."/>
            <person name="Center A."/>
            <person name="Chandra I."/>
            <person name="Cherry J.M."/>
            <person name="Cawley S."/>
            <person name="Dahlke C."/>
            <person name="Davenport L.B."/>
            <person name="Davies P."/>
            <person name="de Pablos B."/>
            <person name="Delcher A."/>
            <person name="Deng Z."/>
            <person name="Mays A.D."/>
            <person name="Dew I."/>
            <person name="Dietz S.M."/>
            <person name="Dodson K."/>
            <person name="Doup L.E."/>
            <person name="Downes M."/>
            <person name="Dugan-Rocha S."/>
            <person name="Dunkov B.C."/>
            <person name="Dunn P."/>
            <person name="Durbin K.J."/>
            <person name="Evangelista C.C."/>
            <person name="Ferraz C."/>
            <person name="Ferriera S."/>
            <person name="Fleischmann W."/>
            <person name="Fosler C."/>
            <person name="Gabrielian A.E."/>
            <person name="Garg N.S."/>
            <person name="Gelbart W.M."/>
            <person name="Glasser K."/>
            <person name="Glodek A."/>
            <person name="Gong F."/>
            <person name="Gorrell J.H."/>
            <person name="Gu Z."/>
            <person name="Guan P."/>
            <person name="Harris M."/>
            <person name="Harris N.L."/>
            <person name="Harvey D.A."/>
            <person name="Heiman T.J."/>
            <person name="Hernandez J.R."/>
            <person name="Houck J."/>
            <person name="Hostin D."/>
            <person name="Houston K.A."/>
            <person name="Howland T.J."/>
            <person name="Wei M.-H."/>
            <person name="Ibegwam C."/>
            <person name="Jalali M."/>
            <person name="Kalush F."/>
            <person name="Karpen G.H."/>
            <person name="Ke Z."/>
            <person name="Kennison J.A."/>
            <person name="Ketchum K.A."/>
            <person name="Kimmel B.E."/>
            <person name="Kodira C.D."/>
            <person name="Kraft C.L."/>
            <person name="Kravitz S."/>
            <person name="Kulp D."/>
            <person name="Lai Z."/>
            <person name="Lasko P."/>
            <person name="Lei Y."/>
            <person name="Levitsky A.A."/>
            <person name="Li J.H."/>
            <person name="Li Z."/>
            <person name="Liang Y."/>
            <person name="Lin X."/>
            <person name="Liu X."/>
            <person name="Mattei B."/>
            <person name="McIntosh T.C."/>
            <person name="McLeod M.P."/>
            <person name="McPherson D."/>
            <person name="Merkulov G."/>
            <person name="Milshina N.V."/>
            <person name="Mobarry C."/>
            <person name="Morris J."/>
            <person name="Moshrefi A."/>
            <person name="Mount S.M."/>
            <person name="Moy M."/>
            <person name="Murphy B."/>
            <person name="Murphy L."/>
            <person name="Muzny D.M."/>
            <person name="Nelson D.L."/>
            <person name="Nelson D.R."/>
            <person name="Nelson K.A."/>
            <person name="Nixon K."/>
            <person name="Nusskern D.R."/>
            <person name="Pacleb J.M."/>
            <person name="Palazzolo M."/>
            <person name="Pittman G.S."/>
            <person name="Pan S."/>
            <person name="Pollard J."/>
            <person name="Puri V."/>
            <person name="Reese M.G."/>
            <person name="Reinert K."/>
            <person name="Remington K."/>
            <person name="Saunders R.D.C."/>
            <person name="Scheeler F."/>
            <person name="Shen H."/>
            <person name="Shue B.C."/>
            <person name="Siden-Kiamos I."/>
            <person name="Simpson M."/>
            <person name="Skupski M.P."/>
            <person name="Smith T.J."/>
            <person name="Spier E."/>
            <person name="Spradling A.C."/>
            <person name="Stapleton M."/>
            <person name="Strong R."/>
            <person name="Sun E."/>
            <person name="Svirskas R."/>
            <person name="Tector C."/>
            <person name="Turner R."/>
            <person name="Venter E."/>
            <person name="Wang A.H."/>
            <person name="Wang X."/>
            <person name="Wang Z.-Y."/>
            <person name="Wassarman D.A."/>
            <person name="Weinstock G.M."/>
            <person name="Weissenbach J."/>
            <person name="Williams S.M."/>
            <person name="Woodage T."/>
            <person name="Worley K.C."/>
            <person name="Wu D."/>
            <person name="Yang S."/>
            <person name="Yao Q.A."/>
            <person name="Ye J."/>
            <person name="Yeh R.-F."/>
            <person name="Zaveri J.S."/>
            <person name="Zhan M."/>
            <person name="Zhang G."/>
            <person name="Zhao Q."/>
            <person name="Zheng L."/>
            <person name="Zheng X.H."/>
            <person name="Zhong F.N."/>
            <person name="Zhong W."/>
            <person name="Zhou X."/>
            <person name="Zhu S.C."/>
            <person name="Zhu X."/>
            <person name="Smith H.O."/>
            <person name="Gibbs R.A."/>
            <person name="Myers E.W."/>
            <person name="Rubin G.M."/>
            <person name="Venter J.C."/>
        </authorList>
    </citation>
    <scope>NUCLEOTIDE SEQUENCE [LARGE SCALE GENOMIC DNA]</scope>
    <source>
        <strain>Berkeley</strain>
    </source>
</reference>
<reference evidence="5 8" key="4">
    <citation type="journal article" date="2002" name="Genome Biol.">
        <title>Annotation of the Drosophila melanogaster euchromatic genome: a systematic review.</title>
        <authorList>
            <person name="Misra S."/>
            <person name="Crosby M.A."/>
            <person name="Mungall C.J."/>
            <person name="Matthews B.B."/>
            <person name="Campbell K.S."/>
            <person name="Hradecky P."/>
            <person name="Huang Y."/>
            <person name="Kaminker J.S."/>
            <person name="Millburn G.H."/>
            <person name="Prochnik S.E."/>
            <person name="Smith C.D."/>
            <person name="Tupy J.L."/>
            <person name="Whitfield E.J."/>
            <person name="Bayraktaroglu L."/>
            <person name="Berman B.P."/>
            <person name="Bettencourt B.R."/>
            <person name="Celniker S.E."/>
            <person name="de Grey A.D.N.J."/>
            <person name="Drysdale R.A."/>
            <person name="Harris N.L."/>
            <person name="Richter J."/>
            <person name="Russo S."/>
            <person name="Schroeder A.J."/>
            <person name="Shu S.Q."/>
            <person name="Stapleton M."/>
            <person name="Yamada C."/>
            <person name="Ashburner M."/>
            <person name="Gelbart W.M."/>
            <person name="Rubin G.M."/>
            <person name="Lewis S.E."/>
        </authorList>
    </citation>
    <scope>GENOME REANNOTATION</scope>
    <source>
        <strain>Berkeley</strain>
    </source>
</reference>
<reference evidence="9 11" key="5">
    <citation type="submission" date="2016-01" db="EMBL/GenBank/DDBJ databases">
        <authorList>
            <person name="Wan K."/>
            <person name="Stapleton M."/>
            <person name="Carlson J.W."/>
            <person name="Booth B."/>
            <person name="Spirohn K."/>
            <person name="Hao T."/>
            <person name="Hu Y."/>
            <person name="Calderwood M."/>
            <person name="Hill D."/>
            <person name="Mohr S."/>
            <person name="Vidal M."/>
            <person name="Chavez C."/>
            <person name="Frise E."/>
            <person name="George R.A."/>
            <person name="Pacleb J.M."/>
            <person name="Park S."/>
            <person name="Wan K.H."/>
            <person name="Yu C."/>
            <person name="Celniker S.E."/>
            <person name="Perrimon N."/>
        </authorList>
    </citation>
    <scope>NUCLEOTIDE SEQUENCE [LARGE SCALE MRNA]</scope>
    <source>
        <strain evidence="9 11">Berkeley</strain>
    </source>
</reference>
<reference key="6">
    <citation type="journal article" date="2009" name="Curr. Biol.">
        <title>Sulfation of eggshell components by Pipe defines dorsal-ventral polarity in the Drosophila embryo.</title>
        <authorList>
            <person name="Zhang Z."/>
            <person name="Stevens L.M."/>
            <person name="Stein D."/>
        </authorList>
    </citation>
    <scope>SULFATION</scope>
</reference>
<sequence>MQIVALTLVAFVAIAGASCPYAAPAPAYSAPAASSGYPAPPCPTNYLFSCQPNLAPAPCAQEAPAYGSAGAYTEQVPHYVGSPNREQLQQFHQRIGMAALMEELRGLGQGIQGQQY</sequence>
<comment type="function">
    <text evidence="4">Major early eggshell protein.</text>
</comment>
<comment type="subcellular location">
    <subcellularLocation>
        <location evidence="4">Secreted</location>
    </subcellularLocation>
</comment>
<comment type="tissue specificity">
    <text evidence="4">Expressed in stage 10 egg-chambers, localized in the outer eggshell (chorion membrane).</text>
</comment>
<comment type="developmental stage">
    <text evidence="4">Expressed during vitelline membrane biosynthesis.</text>
</comment>
<comment type="PTM">
    <text evidence="3 6">Sulfated by pip; may be involved in embryo dorsal-ventral axis determination (PubMed:19540119). Sulfation by pip may occur on covalently bound glycosaminoglycans (Probable).</text>
</comment>
<comment type="similarity">
    <text evidence="5">Belongs to the vitelline membrane family.</text>
</comment>
<comment type="sequence caution" evidence="5">
    <conflict type="erroneous initiation">
        <sequence resource="EMBL-CDS" id="ABC86502"/>
    </conflict>
    <text>Extended N-terminus.</text>
</comment>
<protein>
    <recommendedName>
        <fullName evidence="10">Vitelline membrane protein Vm32E</fullName>
    </recommendedName>
</protein>
<proteinExistence type="evidence at protein level"/>
<name>VTU4_DROME</name>
<keyword id="KW-1185">Reference proteome</keyword>
<keyword id="KW-0964">Secreted</keyword>
<keyword id="KW-0732">Signal</keyword>
<keyword id="KW-0765">Sulfation</keyword>
<dbReference type="EMBL" id="M27647">
    <property type="protein sequence ID" value="AAA29019.1"/>
    <property type="molecule type" value="Genomic_DNA"/>
</dbReference>
<dbReference type="EMBL" id="X12590">
    <property type="protein sequence ID" value="CAA31103.1"/>
    <property type="molecule type" value="Genomic_DNA"/>
</dbReference>
<dbReference type="EMBL" id="EF441681">
    <property type="protein sequence ID" value="ABO71722.1"/>
    <property type="molecule type" value="Genomic_DNA"/>
</dbReference>
<dbReference type="EMBL" id="AE014134">
    <property type="protein sequence ID" value="AAF53085.1"/>
    <property type="molecule type" value="Genomic_DNA"/>
</dbReference>
<dbReference type="EMBL" id="AE014134">
    <property type="protein sequence ID" value="AHN54351.1"/>
    <property type="molecule type" value="Genomic_DNA"/>
</dbReference>
<dbReference type="EMBL" id="BT024440">
    <property type="protein sequence ID" value="ABC86502.2"/>
    <property type="status" value="ALT_INIT"/>
    <property type="molecule type" value="mRNA"/>
</dbReference>
<dbReference type="EMBL" id="KX532034">
    <property type="protein sequence ID" value="ANY27844.1"/>
    <property type="molecule type" value="mRNA"/>
</dbReference>
<dbReference type="PIR" id="A48321">
    <property type="entry name" value="A48321"/>
</dbReference>
<dbReference type="RefSeq" id="NP_001285837.1">
    <property type="nucleotide sequence ID" value="NM_001298908.1"/>
</dbReference>
<dbReference type="RefSeq" id="NP_477103.1">
    <property type="nucleotide sequence ID" value="NM_057755.2"/>
</dbReference>
<dbReference type="BioGRID" id="60618">
    <property type="interactions" value="4"/>
</dbReference>
<dbReference type="FunCoup" id="Q9VKI3">
    <property type="interactions" value="2"/>
</dbReference>
<dbReference type="IntAct" id="Q9VKI3">
    <property type="interactions" value="3"/>
</dbReference>
<dbReference type="STRING" id="7227.FBpp0310213"/>
<dbReference type="PaxDb" id="7227-FBpp0079805"/>
<dbReference type="DNASU" id="34558"/>
<dbReference type="EnsemblMetazoa" id="FBtr0080216">
    <property type="protein sequence ID" value="FBpp0079805"/>
    <property type="gene ID" value="FBgn0014076"/>
</dbReference>
<dbReference type="EnsemblMetazoa" id="FBtr0343618">
    <property type="protein sequence ID" value="FBpp0310213"/>
    <property type="gene ID" value="FBgn0014076"/>
</dbReference>
<dbReference type="GeneID" id="34558"/>
<dbReference type="KEGG" id="dme:Dmel_CG16874"/>
<dbReference type="UCSC" id="CG16874-RA">
    <property type="organism name" value="d. melanogaster"/>
</dbReference>
<dbReference type="AGR" id="FB:FBgn0014076"/>
<dbReference type="CTD" id="34558"/>
<dbReference type="FlyBase" id="FBgn0014076">
    <property type="gene designation" value="Vm32E"/>
</dbReference>
<dbReference type="VEuPathDB" id="VectorBase:FBgn0014076"/>
<dbReference type="HOGENOM" id="CLU_169196_0_0_1"/>
<dbReference type="InParanoid" id="Q9VKI3"/>
<dbReference type="OMA" id="CAQEAQA"/>
<dbReference type="OrthoDB" id="8062718at2759"/>
<dbReference type="PhylomeDB" id="Q9VKI3"/>
<dbReference type="SignaLink" id="Q9VKI3"/>
<dbReference type="BioGRID-ORCS" id="34558">
    <property type="hits" value="0 hits in 1 CRISPR screen"/>
</dbReference>
<dbReference type="GenomeRNAi" id="34558"/>
<dbReference type="PRO" id="PR:Q9VKI3"/>
<dbReference type="Proteomes" id="UP000000803">
    <property type="component" value="Chromosome 2L"/>
</dbReference>
<dbReference type="Bgee" id="FBgn0014076">
    <property type="expression patterns" value="Expressed in ovarian sheath cell (Drosophila) in ovary and 29 other cell types or tissues"/>
</dbReference>
<dbReference type="ExpressionAtlas" id="Q9VKI3">
    <property type="expression patterns" value="baseline and differential"/>
</dbReference>
<dbReference type="GO" id="GO:0042600">
    <property type="term" value="C:egg chorion"/>
    <property type="evidence" value="ECO:0000314"/>
    <property type="project" value="FlyBase"/>
</dbReference>
<dbReference type="GO" id="GO:0005615">
    <property type="term" value="C:extracellular space"/>
    <property type="evidence" value="ECO:0000314"/>
    <property type="project" value="UniProtKB"/>
</dbReference>
<dbReference type="GO" id="GO:0060388">
    <property type="term" value="C:vitelline envelope"/>
    <property type="evidence" value="ECO:0000314"/>
    <property type="project" value="FlyBase"/>
</dbReference>
<dbReference type="GO" id="GO:0008316">
    <property type="term" value="F:structural constituent of vitelline membrane"/>
    <property type="evidence" value="ECO:0000315"/>
    <property type="project" value="UniProtKB"/>
</dbReference>
<dbReference type="GO" id="GO:0007305">
    <property type="term" value="P:vitelline membrane formation involved in chorion-containing eggshell formation"/>
    <property type="evidence" value="ECO:0000315"/>
    <property type="project" value="UniProtKB"/>
</dbReference>
<dbReference type="InterPro" id="IPR013135">
    <property type="entry name" value="Vitelline_membr_Cys-rich-dom"/>
</dbReference>
<dbReference type="Pfam" id="PF10542">
    <property type="entry name" value="Vitelline_membr"/>
    <property type="match status" value="1"/>
</dbReference>
<dbReference type="PROSITE" id="PS51137">
    <property type="entry name" value="VM"/>
    <property type="match status" value="1"/>
</dbReference>
<gene>
    <name evidence="8" type="primary">Vm32E</name>
    <name type="ORF">CG16874</name>
</gene>
<organism>
    <name type="scientific">Drosophila melanogaster</name>
    <name type="common">Fruit fly</name>
    <dbReference type="NCBI Taxonomy" id="7227"/>
    <lineage>
        <taxon>Eukaryota</taxon>
        <taxon>Metazoa</taxon>
        <taxon>Ecdysozoa</taxon>
        <taxon>Arthropoda</taxon>
        <taxon>Hexapoda</taxon>
        <taxon>Insecta</taxon>
        <taxon>Pterygota</taxon>
        <taxon>Neoptera</taxon>
        <taxon>Endopterygota</taxon>
        <taxon>Diptera</taxon>
        <taxon>Brachycera</taxon>
        <taxon>Muscomorpha</taxon>
        <taxon>Ephydroidea</taxon>
        <taxon>Drosophilidae</taxon>
        <taxon>Drosophila</taxon>
        <taxon>Sophophora</taxon>
    </lineage>
</organism>